<dbReference type="EC" id="6.1.1.21" evidence="1"/>
<dbReference type="EMBL" id="CP000381">
    <property type="protein sequence ID" value="ABX73002.1"/>
    <property type="molecule type" value="Genomic_DNA"/>
</dbReference>
<dbReference type="RefSeq" id="WP_012221506.1">
    <property type="nucleotide sequence ID" value="NC_010120.1"/>
</dbReference>
<dbReference type="SMR" id="A9M402"/>
<dbReference type="KEGG" id="nmn:NMCC_0812"/>
<dbReference type="HOGENOM" id="CLU_025113_1_1_4"/>
<dbReference type="Proteomes" id="UP000001177">
    <property type="component" value="Chromosome"/>
</dbReference>
<dbReference type="GO" id="GO:0005737">
    <property type="term" value="C:cytoplasm"/>
    <property type="evidence" value="ECO:0007669"/>
    <property type="project" value="UniProtKB-SubCell"/>
</dbReference>
<dbReference type="GO" id="GO:0005524">
    <property type="term" value="F:ATP binding"/>
    <property type="evidence" value="ECO:0007669"/>
    <property type="project" value="UniProtKB-UniRule"/>
</dbReference>
<dbReference type="GO" id="GO:0004821">
    <property type="term" value="F:histidine-tRNA ligase activity"/>
    <property type="evidence" value="ECO:0007669"/>
    <property type="project" value="UniProtKB-UniRule"/>
</dbReference>
<dbReference type="GO" id="GO:0006427">
    <property type="term" value="P:histidyl-tRNA aminoacylation"/>
    <property type="evidence" value="ECO:0007669"/>
    <property type="project" value="UniProtKB-UniRule"/>
</dbReference>
<dbReference type="CDD" id="cd00773">
    <property type="entry name" value="HisRS-like_core"/>
    <property type="match status" value="1"/>
</dbReference>
<dbReference type="CDD" id="cd00859">
    <property type="entry name" value="HisRS_anticodon"/>
    <property type="match status" value="1"/>
</dbReference>
<dbReference type="FunFam" id="3.30.930.10:FF:000005">
    <property type="entry name" value="Histidine--tRNA ligase"/>
    <property type="match status" value="1"/>
</dbReference>
<dbReference type="Gene3D" id="3.40.50.800">
    <property type="entry name" value="Anticodon-binding domain"/>
    <property type="match status" value="1"/>
</dbReference>
<dbReference type="Gene3D" id="3.30.930.10">
    <property type="entry name" value="Bira Bifunctional Protein, Domain 2"/>
    <property type="match status" value="1"/>
</dbReference>
<dbReference type="HAMAP" id="MF_00127">
    <property type="entry name" value="His_tRNA_synth"/>
    <property type="match status" value="1"/>
</dbReference>
<dbReference type="InterPro" id="IPR006195">
    <property type="entry name" value="aa-tRNA-synth_II"/>
</dbReference>
<dbReference type="InterPro" id="IPR045864">
    <property type="entry name" value="aa-tRNA-synth_II/BPL/LPL"/>
</dbReference>
<dbReference type="InterPro" id="IPR004154">
    <property type="entry name" value="Anticodon-bd"/>
</dbReference>
<dbReference type="InterPro" id="IPR036621">
    <property type="entry name" value="Anticodon-bd_dom_sf"/>
</dbReference>
<dbReference type="InterPro" id="IPR015807">
    <property type="entry name" value="His-tRNA-ligase"/>
</dbReference>
<dbReference type="InterPro" id="IPR041715">
    <property type="entry name" value="HisRS-like_core"/>
</dbReference>
<dbReference type="InterPro" id="IPR004516">
    <property type="entry name" value="HisRS/HisZ"/>
</dbReference>
<dbReference type="InterPro" id="IPR033656">
    <property type="entry name" value="HisRS_anticodon"/>
</dbReference>
<dbReference type="NCBIfam" id="TIGR00442">
    <property type="entry name" value="hisS"/>
    <property type="match status" value="1"/>
</dbReference>
<dbReference type="PANTHER" id="PTHR43707:SF1">
    <property type="entry name" value="HISTIDINE--TRNA LIGASE, MITOCHONDRIAL-RELATED"/>
    <property type="match status" value="1"/>
</dbReference>
<dbReference type="PANTHER" id="PTHR43707">
    <property type="entry name" value="HISTIDYL-TRNA SYNTHETASE"/>
    <property type="match status" value="1"/>
</dbReference>
<dbReference type="Pfam" id="PF03129">
    <property type="entry name" value="HGTP_anticodon"/>
    <property type="match status" value="1"/>
</dbReference>
<dbReference type="Pfam" id="PF13393">
    <property type="entry name" value="tRNA-synt_His"/>
    <property type="match status" value="1"/>
</dbReference>
<dbReference type="PIRSF" id="PIRSF001549">
    <property type="entry name" value="His-tRNA_synth"/>
    <property type="match status" value="1"/>
</dbReference>
<dbReference type="SUPFAM" id="SSF52954">
    <property type="entry name" value="Class II aaRS ABD-related"/>
    <property type="match status" value="1"/>
</dbReference>
<dbReference type="SUPFAM" id="SSF55681">
    <property type="entry name" value="Class II aaRS and biotin synthetases"/>
    <property type="match status" value="1"/>
</dbReference>
<dbReference type="PROSITE" id="PS50862">
    <property type="entry name" value="AA_TRNA_LIGASE_II"/>
    <property type="match status" value="1"/>
</dbReference>
<gene>
    <name evidence="1" type="primary">hisS</name>
    <name type="ordered locus">NMCC_0812</name>
</gene>
<sequence>MAQKIQSVKGMNDLLPVEQKDFKLTAAFWQAFEDTVGRWTRTYGYQQIRTPIVEQTGLFVRSIGEETDVVGKEMYTFSDSNDSLSLSLRPEGTASCLRAVVEHNLLYNSPQKLWYMGPMFRRERPQKGRYRQFHQVGIEALGFEGPDIDAEIIAMSADLWEKLGIREYLTLEINSLGNREERAAHRAALVEYLTRYEDKLDEDSKRRLKTNPLRVLDTKNPDLQEICNAAPRLVDYLGEASQNHYARFKAMLDGLGIQYIENPRLVRGLDYYNQTVFEWTTDKLGAQATVCGGGRYDGLIEELGGKPAPSIGFAMGIERLLFLVSEYGSLEVNAAPDVYAMHQGERADLQVMKYAQALRTQGFNVMQHSGYQSLKAQMKKADNSGARFALIVAQDELANGTVTLKDMNGAHGQQTVAAADLTNTLQQWKNA</sequence>
<comment type="catalytic activity">
    <reaction evidence="1">
        <text>tRNA(His) + L-histidine + ATP = L-histidyl-tRNA(His) + AMP + diphosphate + H(+)</text>
        <dbReference type="Rhea" id="RHEA:17313"/>
        <dbReference type="Rhea" id="RHEA-COMP:9665"/>
        <dbReference type="Rhea" id="RHEA-COMP:9689"/>
        <dbReference type="ChEBI" id="CHEBI:15378"/>
        <dbReference type="ChEBI" id="CHEBI:30616"/>
        <dbReference type="ChEBI" id="CHEBI:33019"/>
        <dbReference type="ChEBI" id="CHEBI:57595"/>
        <dbReference type="ChEBI" id="CHEBI:78442"/>
        <dbReference type="ChEBI" id="CHEBI:78527"/>
        <dbReference type="ChEBI" id="CHEBI:456215"/>
        <dbReference type="EC" id="6.1.1.21"/>
    </reaction>
</comment>
<comment type="subunit">
    <text evidence="1">Homodimer.</text>
</comment>
<comment type="subcellular location">
    <subcellularLocation>
        <location evidence="1">Cytoplasm</location>
    </subcellularLocation>
</comment>
<comment type="similarity">
    <text evidence="1">Belongs to the class-II aminoacyl-tRNA synthetase family.</text>
</comment>
<name>SYH_NEIM0</name>
<protein>
    <recommendedName>
        <fullName evidence="1">Histidine--tRNA ligase</fullName>
        <ecNumber evidence="1">6.1.1.21</ecNumber>
    </recommendedName>
    <alternativeName>
        <fullName evidence="1">Histidyl-tRNA synthetase</fullName>
        <shortName evidence="1">HisRS</shortName>
    </alternativeName>
</protein>
<proteinExistence type="inferred from homology"/>
<organism>
    <name type="scientific">Neisseria meningitidis serogroup C (strain 053442)</name>
    <dbReference type="NCBI Taxonomy" id="374833"/>
    <lineage>
        <taxon>Bacteria</taxon>
        <taxon>Pseudomonadati</taxon>
        <taxon>Pseudomonadota</taxon>
        <taxon>Betaproteobacteria</taxon>
        <taxon>Neisseriales</taxon>
        <taxon>Neisseriaceae</taxon>
        <taxon>Neisseria</taxon>
    </lineage>
</organism>
<reference key="1">
    <citation type="journal article" date="2008" name="Genomics">
        <title>Characterization of ST-4821 complex, a unique Neisseria meningitidis clone.</title>
        <authorList>
            <person name="Peng J."/>
            <person name="Yang L."/>
            <person name="Yang F."/>
            <person name="Yang J."/>
            <person name="Yan Y."/>
            <person name="Nie H."/>
            <person name="Zhang X."/>
            <person name="Xiong Z."/>
            <person name="Jiang Y."/>
            <person name="Cheng F."/>
            <person name="Xu X."/>
            <person name="Chen S."/>
            <person name="Sun L."/>
            <person name="Li W."/>
            <person name="Shen Y."/>
            <person name="Shao Z."/>
            <person name="Liang X."/>
            <person name="Xu J."/>
            <person name="Jin Q."/>
        </authorList>
    </citation>
    <scope>NUCLEOTIDE SEQUENCE [LARGE SCALE GENOMIC DNA]</scope>
    <source>
        <strain>053442</strain>
    </source>
</reference>
<evidence type="ECO:0000255" key="1">
    <source>
        <dbReference type="HAMAP-Rule" id="MF_00127"/>
    </source>
</evidence>
<accession>A9M402</accession>
<keyword id="KW-0030">Aminoacyl-tRNA synthetase</keyword>
<keyword id="KW-0067">ATP-binding</keyword>
<keyword id="KW-0963">Cytoplasm</keyword>
<keyword id="KW-0436">Ligase</keyword>
<keyword id="KW-0547">Nucleotide-binding</keyword>
<keyword id="KW-0648">Protein biosynthesis</keyword>
<feature type="chain" id="PRO_1000076278" description="Histidine--tRNA ligase">
    <location>
        <begin position="1"/>
        <end position="431"/>
    </location>
</feature>